<reference key="1">
    <citation type="journal article" date="2002" name="Proc. Natl. Acad. Sci. U.S.A.">
        <title>Extensive mosaic structure revealed by the complete genome sequence of uropathogenic Escherichia coli.</title>
        <authorList>
            <person name="Welch R.A."/>
            <person name="Burland V."/>
            <person name="Plunkett G. III"/>
            <person name="Redford P."/>
            <person name="Roesch P."/>
            <person name="Rasko D."/>
            <person name="Buckles E.L."/>
            <person name="Liou S.-R."/>
            <person name="Boutin A."/>
            <person name="Hackett J."/>
            <person name="Stroud D."/>
            <person name="Mayhew G.F."/>
            <person name="Rose D.J."/>
            <person name="Zhou S."/>
            <person name="Schwartz D.C."/>
            <person name="Perna N.T."/>
            <person name="Mobley H.L.T."/>
            <person name="Donnenberg M.S."/>
            <person name="Blattner F.R."/>
        </authorList>
    </citation>
    <scope>NUCLEOTIDE SEQUENCE [LARGE SCALE GENOMIC DNA]</scope>
    <source>
        <strain>CFT073 / ATCC 700928 / UPEC</strain>
    </source>
</reference>
<keyword id="KW-0012">Acyltransferase</keyword>
<keyword id="KW-0997">Cell inner membrane</keyword>
<keyword id="KW-1003">Cell membrane</keyword>
<keyword id="KW-0444">Lipid biosynthesis</keyword>
<keyword id="KW-0443">Lipid metabolism</keyword>
<keyword id="KW-0472">Membrane</keyword>
<keyword id="KW-0594">Phospholipid biosynthesis</keyword>
<keyword id="KW-1208">Phospholipid metabolism</keyword>
<keyword id="KW-1185">Reference proteome</keyword>
<keyword id="KW-0808">Transferase</keyword>
<protein>
    <recommendedName>
        <fullName>Glycerol-3-phosphate acyltransferase</fullName>
        <shortName>GPAT</shortName>
        <ecNumber>2.3.1.15</ecNumber>
    </recommendedName>
</protein>
<organism>
    <name type="scientific">Escherichia coli O6:H1 (strain CFT073 / ATCC 700928 / UPEC)</name>
    <dbReference type="NCBI Taxonomy" id="199310"/>
    <lineage>
        <taxon>Bacteria</taxon>
        <taxon>Pseudomonadati</taxon>
        <taxon>Pseudomonadota</taxon>
        <taxon>Gammaproteobacteria</taxon>
        <taxon>Enterobacterales</taxon>
        <taxon>Enterobacteriaceae</taxon>
        <taxon>Escherichia</taxon>
    </lineage>
</organism>
<comment type="catalytic activity">
    <reaction>
        <text>sn-glycerol 3-phosphate + an acyl-CoA = a 1-acyl-sn-glycero-3-phosphate + CoA</text>
        <dbReference type="Rhea" id="RHEA:15325"/>
        <dbReference type="ChEBI" id="CHEBI:57287"/>
        <dbReference type="ChEBI" id="CHEBI:57597"/>
        <dbReference type="ChEBI" id="CHEBI:57970"/>
        <dbReference type="ChEBI" id="CHEBI:58342"/>
        <dbReference type="EC" id="2.3.1.15"/>
    </reaction>
</comment>
<comment type="pathway">
    <text>Phospholipid metabolism; CDP-diacylglycerol biosynthesis; CDP-diacylglycerol from sn-glycerol 3-phosphate: step 1/3.</text>
</comment>
<comment type="subcellular location">
    <subcellularLocation>
        <location evidence="1">Cell inner membrane</location>
        <topology evidence="1">Peripheral membrane protein</topology>
        <orientation evidence="1">Cytoplasmic side</orientation>
    </subcellularLocation>
</comment>
<comment type="domain">
    <text evidence="1">The HXXXXD motif is essential for acyltransferase activity and may constitute the binding site for the phosphate moiety of the glycerol-3-phosphate.</text>
</comment>
<comment type="similarity">
    <text evidence="2">Belongs to the GPAT/DAPAT family.</text>
</comment>
<comment type="sequence caution" evidence="2">
    <conflict type="erroneous initiation">
        <sequence resource="EMBL-CDS" id="AAN83437"/>
    </conflict>
</comment>
<evidence type="ECO:0000250" key="1"/>
<evidence type="ECO:0000305" key="2"/>
<name>PLSB_ECOL6</name>
<sequence length="807" mass="91381">MSGWPRIYYKLLNLPLSILVKSKSIPADPAPELGLDTSRPIMYVLPYNSKADLLTLRAQCLAHDLPDPLEPLEIDGTLLPRYVFIHGGPRVFTYYTPKEESIKLFHDYLDLHRSNPNLDVQMVPVSVMFGRAPGREKGEVNPPLRMLNGVQKFFAVLWLGRDSFVRFSPSVSLRRMADEHGTDKTIAQKLARVARMHFARQRLAAVGPRLPARQDLFNKLLASRAIAKAVEDEARSKKISHEKAQQNAIALMEEIAANFSYEMIRLTDRILGFTWNRLYQGINVHNAERVRQLAHDGHELVYVPCHRSHMDYLLLSYVLYHQGLVPPHIAAGINLNFWPAGPIFRRLGAFFIRRTFKGNKLYSTVFREYLGELFSRGYSVEYFVEGGRSRTGRLLDPKTGTLSMTIQAMLRGGTRPITLIPIYIGYEHVMEVGTYAKELRGATKEKESLPQMLRGLSKLRNLGQGYVNFGEPMPLMTYLNQHVPDWRESIDPIEAVRPAWLTPTVNNIAADLMVRINNAGAANAMNLCCTALLASRQRSLTREQLTEQLNCYLDLMRNVPYSTDSTVPSASASELIDHALQMNKFEVEKDTIGDIIILPREQAVLMTYYRNNIAHMLVLPSLMAAIVTQHRHISRDVLMEHVNVLYPMLKAELFLRWDRDELPDVIDALANEMQRQGLITLQDDELHINPAHSRTLQLLAAGARETLQRYAITFWLLSANPSINRGTLEKESRTVAQRLSVLHGINAPEFFDKAVFSSLVLTLRDEGYISDSGDAEPAETMKVYQLLAELITSDVRLTIESATQGEG</sequence>
<gene>
    <name type="primary">plsB</name>
    <name type="ordered locus">c5011</name>
</gene>
<feature type="initiator methionine" description="Removed" evidence="1">
    <location>
        <position position="1"/>
    </location>
</feature>
<feature type="chain" id="PRO_0000195219" description="Glycerol-3-phosphate acyltransferase">
    <location>
        <begin position="2"/>
        <end position="807"/>
    </location>
</feature>
<feature type="short sequence motif" description="HXXXXD motif">
    <location>
        <begin position="306"/>
        <end position="311"/>
    </location>
</feature>
<dbReference type="EC" id="2.3.1.15"/>
<dbReference type="EMBL" id="AE014075">
    <property type="protein sequence ID" value="AAN83437.1"/>
    <property type="status" value="ALT_INIT"/>
    <property type="molecule type" value="Genomic_DNA"/>
</dbReference>
<dbReference type="RefSeq" id="WP_000017354.1">
    <property type="nucleotide sequence ID" value="NZ_CP051263.1"/>
</dbReference>
<dbReference type="SMR" id="P0A7A8"/>
<dbReference type="STRING" id="199310.c5011"/>
<dbReference type="GeneID" id="75204185"/>
<dbReference type="KEGG" id="ecc:c5011"/>
<dbReference type="eggNOG" id="COG2937">
    <property type="taxonomic scope" value="Bacteria"/>
</dbReference>
<dbReference type="HOGENOM" id="CLU_015407_0_0_6"/>
<dbReference type="UniPathway" id="UPA00557">
    <property type="reaction ID" value="UER00612"/>
</dbReference>
<dbReference type="Proteomes" id="UP000001410">
    <property type="component" value="Chromosome"/>
</dbReference>
<dbReference type="GO" id="GO:0005886">
    <property type="term" value="C:plasma membrane"/>
    <property type="evidence" value="ECO:0007669"/>
    <property type="project" value="UniProtKB-SubCell"/>
</dbReference>
<dbReference type="GO" id="GO:0004366">
    <property type="term" value="F:glycerol-3-phosphate O-acyltransferase activity"/>
    <property type="evidence" value="ECO:0007669"/>
    <property type="project" value="UniProtKB-UniRule"/>
</dbReference>
<dbReference type="GO" id="GO:0016024">
    <property type="term" value="P:CDP-diacylglycerol biosynthetic process"/>
    <property type="evidence" value="ECO:0007669"/>
    <property type="project" value="UniProtKB-UniRule"/>
</dbReference>
<dbReference type="GO" id="GO:0006631">
    <property type="term" value="P:fatty acid metabolic process"/>
    <property type="evidence" value="ECO:0007669"/>
    <property type="project" value="TreeGrafter"/>
</dbReference>
<dbReference type="CDD" id="cd07993">
    <property type="entry name" value="LPLAT_DHAPAT-like"/>
    <property type="match status" value="1"/>
</dbReference>
<dbReference type="HAMAP" id="MF_00393">
    <property type="entry name" value="Glyc3P_acyltrans"/>
    <property type="match status" value="1"/>
</dbReference>
<dbReference type="InterPro" id="IPR022284">
    <property type="entry name" value="GPAT/DHAPAT"/>
</dbReference>
<dbReference type="InterPro" id="IPR045520">
    <property type="entry name" value="GPAT/DHAPAT_C"/>
</dbReference>
<dbReference type="InterPro" id="IPR041728">
    <property type="entry name" value="GPAT/DHAPAT_LPLAT"/>
</dbReference>
<dbReference type="InterPro" id="IPR028354">
    <property type="entry name" value="GPAT_PlsB"/>
</dbReference>
<dbReference type="InterPro" id="IPR002123">
    <property type="entry name" value="Plipid/glycerol_acylTrfase"/>
</dbReference>
<dbReference type="NCBIfam" id="TIGR03703">
    <property type="entry name" value="plsB"/>
    <property type="match status" value="1"/>
</dbReference>
<dbReference type="NCBIfam" id="NF003441">
    <property type="entry name" value="PRK04974.1"/>
    <property type="match status" value="1"/>
</dbReference>
<dbReference type="PANTHER" id="PTHR12563:SF17">
    <property type="entry name" value="DIHYDROXYACETONE PHOSPHATE ACYLTRANSFERASE"/>
    <property type="match status" value="1"/>
</dbReference>
<dbReference type="PANTHER" id="PTHR12563">
    <property type="entry name" value="GLYCEROL-3-PHOSPHATE ACYLTRANSFERASE"/>
    <property type="match status" value="1"/>
</dbReference>
<dbReference type="Pfam" id="PF01553">
    <property type="entry name" value="Acyltransferase"/>
    <property type="match status" value="1"/>
</dbReference>
<dbReference type="Pfam" id="PF19277">
    <property type="entry name" value="GPAT_C"/>
    <property type="match status" value="1"/>
</dbReference>
<dbReference type="PIRSF" id="PIRSF500064">
    <property type="entry name" value="GPAT"/>
    <property type="match status" value="1"/>
</dbReference>
<dbReference type="PIRSF" id="PIRSF000437">
    <property type="entry name" value="GPAT_DHAPAT"/>
    <property type="match status" value="1"/>
</dbReference>
<dbReference type="SMART" id="SM00563">
    <property type="entry name" value="PlsC"/>
    <property type="match status" value="1"/>
</dbReference>
<dbReference type="SUPFAM" id="SSF69593">
    <property type="entry name" value="Glycerol-3-phosphate (1)-acyltransferase"/>
    <property type="match status" value="1"/>
</dbReference>
<proteinExistence type="inferred from homology"/>
<accession>P0A7A8</accession>
<accession>P00482</accession>
<accession>Q9S683</accession>